<organism>
    <name type="scientific">Schizosaccharomyces pombe (strain 972 / ATCC 24843)</name>
    <name type="common">Fission yeast</name>
    <dbReference type="NCBI Taxonomy" id="284812"/>
    <lineage>
        <taxon>Eukaryota</taxon>
        <taxon>Fungi</taxon>
        <taxon>Dikarya</taxon>
        <taxon>Ascomycota</taxon>
        <taxon>Taphrinomycotina</taxon>
        <taxon>Schizosaccharomycetes</taxon>
        <taxon>Schizosaccharomycetales</taxon>
        <taxon>Schizosaccharomycetaceae</taxon>
        <taxon>Schizosaccharomyces</taxon>
    </lineage>
</organism>
<reference key="1">
    <citation type="journal article" date="2001" name="Mol. Biol. Cell">
        <title>The Schizosaccharomyces pombe spo3+ gene is required for assembly of the forespore membrane and genetically interacts with psy1(+)-encoding syntaxin-like protein.</title>
        <authorList>
            <person name="Nakamura T."/>
            <person name="Nakamura-Kubo M."/>
            <person name="Hirata A."/>
            <person name="Shimoda C."/>
        </authorList>
    </citation>
    <scope>NUCLEOTIDE SEQUENCE [GENOMIC DNA]</scope>
    <scope>SUBCELLULAR LOCATION</scope>
</reference>
<reference key="2">
    <citation type="journal article" date="2002" name="Nature">
        <title>The genome sequence of Schizosaccharomyces pombe.</title>
        <authorList>
            <person name="Wood V."/>
            <person name="Gwilliam R."/>
            <person name="Rajandream M.A."/>
            <person name="Lyne M.H."/>
            <person name="Lyne R."/>
            <person name="Stewart A."/>
            <person name="Sgouros J.G."/>
            <person name="Peat N."/>
            <person name="Hayles J."/>
            <person name="Baker S.G."/>
            <person name="Basham D."/>
            <person name="Bowman S."/>
            <person name="Brooks K."/>
            <person name="Brown D."/>
            <person name="Brown S."/>
            <person name="Chillingworth T."/>
            <person name="Churcher C.M."/>
            <person name="Collins M."/>
            <person name="Connor R."/>
            <person name="Cronin A."/>
            <person name="Davis P."/>
            <person name="Feltwell T."/>
            <person name="Fraser A."/>
            <person name="Gentles S."/>
            <person name="Goble A."/>
            <person name="Hamlin N."/>
            <person name="Harris D.E."/>
            <person name="Hidalgo J."/>
            <person name="Hodgson G."/>
            <person name="Holroyd S."/>
            <person name="Hornsby T."/>
            <person name="Howarth S."/>
            <person name="Huckle E.J."/>
            <person name="Hunt S."/>
            <person name="Jagels K."/>
            <person name="James K.D."/>
            <person name="Jones L."/>
            <person name="Jones M."/>
            <person name="Leather S."/>
            <person name="McDonald S."/>
            <person name="McLean J."/>
            <person name="Mooney P."/>
            <person name="Moule S."/>
            <person name="Mungall K.L."/>
            <person name="Murphy L.D."/>
            <person name="Niblett D."/>
            <person name="Odell C."/>
            <person name="Oliver K."/>
            <person name="O'Neil S."/>
            <person name="Pearson D."/>
            <person name="Quail M.A."/>
            <person name="Rabbinowitsch E."/>
            <person name="Rutherford K.M."/>
            <person name="Rutter S."/>
            <person name="Saunders D."/>
            <person name="Seeger K."/>
            <person name="Sharp S."/>
            <person name="Skelton J."/>
            <person name="Simmonds M.N."/>
            <person name="Squares R."/>
            <person name="Squares S."/>
            <person name="Stevens K."/>
            <person name="Taylor K."/>
            <person name="Taylor R.G."/>
            <person name="Tivey A."/>
            <person name="Walsh S.V."/>
            <person name="Warren T."/>
            <person name="Whitehead S."/>
            <person name="Woodward J.R."/>
            <person name="Volckaert G."/>
            <person name="Aert R."/>
            <person name="Robben J."/>
            <person name="Grymonprez B."/>
            <person name="Weltjens I."/>
            <person name="Vanstreels E."/>
            <person name="Rieger M."/>
            <person name="Schaefer M."/>
            <person name="Mueller-Auer S."/>
            <person name="Gabel C."/>
            <person name="Fuchs M."/>
            <person name="Duesterhoeft A."/>
            <person name="Fritzc C."/>
            <person name="Holzer E."/>
            <person name="Moestl D."/>
            <person name="Hilbert H."/>
            <person name="Borzym K."/>
            <person name="Langer I."/>
            <person name="Beck A."/>
            <person name="Lehrach H."/>
            <person name="Reinhardt R."/>
            <person name="Pohl T.M."/>
            <person name="Eger P."/>
            <person name="Zimmermann W."/>
            <person name="Wedler H."/>
            <person name="Wambutt R."/>
            <person name="Purnelle B."/>
            <person name="Goffeau A."/>
            <person name="Cadieu E."/>
            <person name="Dreano S."/>
            <person name="Gloux S."/>
            <person name="Lelaure V."/>
            <person name="Mottier S."/>
            <person name="Galibert F."/>
            <person name="Aves S.J."/>
            <person name="Xiang Z."/>
            <person name="Hunt C."/>
            <person name="Moore K."/>
            <person name="Hurst S.M."/>
            <person name="Lucas M."/>
            <person name="Rochet M."/>
            <person name="Gaillardin C."/>
            <person name="Tallada V.A."/>
            <person name="Garzon A."/>
            <person name="Thode G."/>
            <person name="Daga R.R."/>
            <person name="Cruzado L."/>
            <person name="Jimenez J."/>
            <person name="Sanchez M."/>
            <person name="del Rey F."/>
            <person name="Benito J."/>
            <person name="Dominguez A."/>
            <person name="Revuelta J.L."/>
            <person name="Moreno S."/>
            <person name="Armstrong J."/>
            <person name="Forsburg S.L."/>
            <person name="Cerutti L."/>
            <person name="Lowe T."/>
            <person name="McCombie W.R."/>
            <person name="Paulsen I."/>
            <person name="Potashkin J."/>
            <person name="Shpakovski G.V."/>
            <person name="Ussery D."/>
            <person name="Barrell B.G."/>
            <person name="Nurse P."/>
        </authorList>
    </citation>
    <scope>NUCLEOTIDE SEQUENCE [LARGE SCALE GENOMIC DNA]</scope>
    <source>
        <strain>972 / ATCC 24843</strain>
    </source>
</reference>
<dbReference type="EMBL" id="CU329672">
    <property type="protein sequence ID" value="CAB58411.1"/>
    <property type="molecule type" value="Genomic_DNA"/>
</dbReference>
<dbReference type="PIR" id="T41624">
    <property type="entry name" value="T41624"/>
</dbReference>
<dbReference type="RefSeq" id="NP_588053.1">
    <property type="nucleotide sequence ID" value="NM_001023045.2"/>
</dbReference>
<dbReference type="SMR" id="Q9USH7"/>
<dbReference type="BioGRID" id="275943">
    <property type="interactions" value="11"/>
</dbReference>
<dbReference type="FunCoup" id="Q9USH7">
    <property type="interactions" value="233"/>
</dbReference>
<dbReference type="STRING" id="284812.Q9USH7"/>
<dbReference type="SwissPalm" id="Q9USH7"/>
<dbReference type="PaxDb" id="4896-SPCC825.03c.1"/>
<dbReference type="EnsemblFungi" id="SPCC825.03c.1">
    <property type="protein sequence ID" value="SPCC825.03c.1:pep"/>
    <property type="gene ID" value="SPCC825.03c"/>
</dbReference>
<dbReference type="GeneID" id="2539377"/>
<dbReference type="KEGG" id="spo:2539377"/>
<dbReference type="PomBase" id="SPCC825.03c">
    <property type="gene designation" value="psy1"/>
</dbReference>
<dbReference type="VEuPathDB" id="FungiDB:SPCC825.03c"/>
<dbReference type="eggNOG" id="KOG0810">
    <property type="taxonomic scope" value="Eukaryota"/>
</dbReference>
<dbReference type="HOGENOM" id="CLU_042423_0_1_1"/>
<dbReference type="InParanoid" id="Q9USH7"/>
<dbReference type="OMA" id="RWICFIL"/>
<dbReference type="PhylomeDB" id="Q9USH7"/>
<dbReference type="Reactome" id="R-SPO-114516">
    <property type="pathway name" value="Disinhibition of SNARE formation"/>
</dbReference>
<dbReference type="Reactome" id="R-SPO-9609523">
    <property type="pathway name" value="Insertion of tail-anchored proteins into the endoplasmic reticulum membrane"/>
</dbReference>
<dbReference type="PRO" id="PR:Q9USH7"/>
<dbReference type="Proteomes" id="UP000002485">
    <property type="component" value="Chromosome III"/>
</dbReference>
<dbReference type="GO" id="GO:0032153">
    <property type="term" value="C:cell division site"/>
    <property type="evidence" value="ECO:0000314"/>
    <property type="project" value="PomBase"/>
</dbReference>
<dbReference type="GO" id="GO:0051286">
    <property type="term" value="C:cell tip"/>
    <property type="evidence" value="ECO:0000314"/>
    <property type="project" value="PomBase"/>
</dbReference>
<dbReference type="GO" id="GO:0005737">
    <property type="term" value="C:cytoplasm"/>
    <property type="evidence" value="ECO:0000314"/>
    <property type="project" value="PomBase"/>
</dbReference>
<dbReference type="GO" id="GO:0012505">
    <property type="term" value="C:endomembrane system"/>
    <property type="evidence" value="ECO:0000318"/>
    <property type="project" value="GO_Central"/>
</dbReference>
<dbReference type="GO" id="GO:0005768">
    <property type="term" value="C:endosome"/>
    <property type="evidence" value="ECO:0000314"/>
    <property type="project" value="PomBase"/>
</dbReference>
<dbReference type="GO" id="GO:0005794">
    <property type="term" value="C:Golgi apparatus"/>
    <property type="evidence" value="ECO:0007005"/>
    <property type="project" value="PomBase"/>
</dbReference>
<dbReference type="GO" id="GO:0005886">
    <property type="term" value="C:plasma membrane"/>
    <property type="evidence" value="ECO:0000314"/>
    <property type="project" value="PomBase"/>
</dbReference>
<dbReference type="GO" id="GO:0044853">
    <property type="term" value="C:plasma membrane raft"/>
    <property type="evidence" value="ECO:0000314"/>
    <property type="project" value="PomBase"/>
</dbReference>
<dbReference type="GO" id="GO:0005628">
    <property type="term" value="C:prospore membrane"/>
    <property type="evidence" value="ECO:0000314"/>
    <property type="project" value="PomBase"/>
</dbReference>
<dbReference type="GO" id="GO:0070056">
    <property type="term" value="C:prospore membrane leading edge"/>
    <property type="evidence" value="ECO:0000314"/>
    <property type="project" value="PomBase"/>
</dbReference>
<dbReference type="GO" id="GO:0070057">
    <property type="term" value="C:prospore membrane spindle pole body attachment site"/>
    <property type="evidence" value="ECO:0000314"/>
    <property type="project" value="PomBase"/>
</dbReference>
<dbReference type="GO" id="GO:0031201">
    <property type="term" value="C:SNARE complex"/>
    <property type="evidence" value="ECO:0000318"/>
    <property type="project" value="GO_Central"/>
</dbReference>
<dbReference type="GO" id="GO:0005484">
    <property type="term" value="F:SNAP receptor activity"/>
    <property type="evidence" value="ECO:0000318"/>
    <property type="project" value="GO_Central"/>
</dbReference>
<dbReference type="GO" id="GO:0000149">
    <property type="term" value="F:SNARE binding"/>
    <property type="evidence" value="ECO:0000318"/>
    <property type="project" value="GO_Central"/>
</dbReference>
<dbReference type="GO" id="GO:0030437">
    <property type="term" value="P:ascospore formation"/>
    <property type="evidence" value="ECO:0000316"/>
    <property type="project" value="PomBase"/>
</dbReference>
<dbReference type="GO" id="GO:0032120">
    <property type="term" value="P:ascospore-type prospore membrane formation"/>
    <property type="evidence" value="ECO:0000315"/>
    <property type="project" value="PomBase"/>
</dbReference>
<dbReference type="GO" id="GO:0006887">
    <property type="term" value="P:exocytosis"/>
    <property type="evidence" value="ECO:0000318"/>
    <property type="project" value="GO_Central"/>
</dbReference>
<dbReference type="GO" id="GO:0006886">
    <property type="term" value="P:intracellular protein transport"/>
    <property type="evidence" value="ECO:0000318"/>
    <property type="project" value="GO_Central"/>
</dbReference>
<dbReference type="GO" id="GO:0048278">
    <property type="term" value="P:vesicle docking"/>
    <property type="evidence" value="ECO:0000318"/>
    <property type="project" value="GO_Central"/>
</dbReference>
<dbReference type="GO" id="GO:0006906">
    <property type="term" value="P:vesicle fusion"/>
    <property type="evidence" value="ECO:0000318"/>
    <property type="project" value="GO_Central"/>
</dbReference>
<dbReference type="CDD" id="cd15849">
    <property type="entry name" value="SNARE_Sso1"/>
    <property type="match status" value="1"/>
</dbReference>
<dbReference type="CDD" id="cd00179">
    <property type="entry name" value="SynN"/>
    <property type="match status" value="1"/>
</dbReference>
<dbReference type="FunFam" id="1.20.58.70:FF:000008">
    <property type="entry name" value="Syntaxin family protein"/>
    <property type="match status" value="1"/>
</dbReference>
<dbReference type="Gene3D" id="1.20.58.70">
    <property type="match status" value="1"/>
</dbReference>
<dbReference type="InterPro" id="IPR010989">
    <property type="entry name" value="SNARE"/>
</dbReference>
<dbReference type="InterPro" id="IPR045242">
    <property type="entry name" value="Syntaxin"/>
</dbReference>
<dbReference type="InterPro" id="IPR006012">
    <property type="entry name" value="Syntaxin/epimorphin_CS"/>
</dbReference>
<dbReference type="InterPro" id="IPR006011">
    <property type="entry name" value="Syntaxin_N"/>
</dbReference>
<dbReference type="InterPro" id="IPR000727">
    <property type="entry name" value="T_SNARE_dom"/>
</dbReference>
<dbReference type="PANTHER" id="PTHR19957:SF307">
    <property type="entry name" value="PROTEIN SSO1-RELATED"/>
    <property type="match status" value="1"/>
</dbReference>
<dbReference type="PANTHER" id="PTHR19957">
    <property type="entry name" value="SYNTAXIN"/>
    <property type="match status" value="1"/>
</dbReference>
<dbReference type="Pfam" id="PF05739">
    <property type="entry name" value="SNARE"/>
    <property type="match status" value="1"/>
</dbReference>
<dbReference type="Pfam" id="PF00804">
    <property type="entry name" value="Syntaxin"/>
    <property type="match status" value="1"/>
</dbReference>
<dbReference type="SMART" id="SM00503">
    <property type="entry name" value="SynN"/>
    <property type="match status" value="1"/>
</dbReference>
<dbReference type="SMART" id="SM00397">
    <property type="entry name" value="t_SNARE"/>
    <property type="match status" value="1"/>
</dbReference>
<dbReference type="SUPFAM" id="SSF47661">
    <property type="entry name" value="t-snare proteins"/>
    <property type="match status" value="1"/>
</dbReference>
<dbReference type="PROSITE" id="PS00914">
    <property type="entry name" value="SYNTAXIN"/>
    <property type="match status" value="1"/>
</dbReference>
<dbReference type="PROSITE" id="PS50192">
    <property type="entry name" value="T_SNARE"/>
    <property type="match status" value="1"/>
</dbReference>
<gene>
    <name type="primary">psy1</name>
    <name type="synonym">sso1</name>
    <name type="ORF">SPCC825.03c</name>
</gene>
<feature type="chain" id="PRO_0000210269" description="Syntaxin-like protein psy1">
    <location>
        <begin position="1"/>
        <end position="284"/>
    </location>
</feature>
<feature type="transmembrane region" description="Helical; Anchor for type IV membrane protein" evidence="1">
    <location>
        <begin position="260"/>
        <end position="280"/>
    </location>
</feature>
<feature type="domain" description="t-SNARE coiled-coil homology" evidence="2">
    <location>
        <begin position="181"/>
        <end position="243"/>
    </location>
</feature>
<feature type="coiled-coil region" evidence="1">
    <location>
        <begin position="23"/>
        <end position="57"/>
    </location>
</feature>
<evidence type="ECO:0000255" key="1"/>
<evidence type="ECO:0000255" key="2">
    <source>
        <dbReference type="PROSITE-ProRule" id="PRU00202"/>
    </source>
</evidence>
<evidence type="ECO:0000269" key="3">
    <source>
    </source>
</evidence>
<evidence type="ECO:0000305" key="4"/>
<sequence length="284" mass="32550">MNKANDYTLGVEMIPLSMGEFFEEIDHIRDAIRQIEDNVGRIEMLHQQSLQEIDEANIAATTRHLEGYTSDTRRLQTSVQLAIRSLESQNMQLPPDNDTATRKTQTEAVKKKFMDQIRHFLQIEKTYRAQYEQRMRRQLEIANPRATEDDFQTAINEENGGQVFAQALLRSNRSGEARTALREVQERHADIKRIERTIAELAQLFQDMATMVQEQEPMVDKIVTDAVNVRTNMGEGTQHMDRAIKSARAARKKKWICFGICVVIICVIVAVLCGVLIPVLGNRH</sequence>
<name>PSY1_SCHPO</name>
<proteinExistence type="inferred from homology"/>
<protein>
    <recommendedName>
        <fullName>Syntaxin-like protein psy1</fullName>
    </recommendedName>
</protein>
<keyword id="KW-1003">Cell membrane</keyword>
<keyword id="KW-0175">Coiled coil</keyword>
<keyword id="KW-0472">Membrane</keyword>
<keyword id="KW-1185">Reference proteome</keyword>
<keyword id="KW-0812">Transmembrane</keyword>
<keyword id="KW-1133">Transmembrane helix</keyword>
<comment type="subcellular location">
    <subcellularLocation>
        <location evidence="3">Cell membrane</location>
        <topology evidence="3">Single-pass type IV membrane protein</topology>
    </subcellularLocation>
    <subcellularLocation>
        <location evidence="3">Prospore membrane</location>
    </subcellularLocation>
    <text>During vegetative growth located at the plasma membrane. As meiosis II is initiated located at the forespore membrane.</text>
</comment>
<comment type="similarity">
    <text evidence="4">Belongs to the syntaxin family.</text>
</comment>
<accession>Q9USH7</accession>